<name>DER_HALHL</name>
<dbReference type="EMBL" id="CP000544">
    <property type="protein sequence ID" value="ABM61377.1"/>
    <property type="molecule type" value="Genomic_DNA"/>
</dbReference>
<dbReference type="RefSeq" id="WP_011813400.1">
    <property type="nucleotide sequence ID" value="NC_008789.1"/>
</dbReference>
<dbReference type="SMR" id="A1WUL5"/>
<dbReference type="STRING" id="349124.Hhal_0591"/>
<dbReference type="KEGG" id="hha:Hhal_0591"/>
<dbReference type="eggNOG" id="COG1160">
    <property type="taxonomic scope" value="Bacteria"/>
</dbReference>
<dbReference type="HOGENOM" id="CLU_016077_6_2_6"/>
<dbReference type="OrthoDB" id="9805918at2"/>
<dbReference type="Proteomes" id="UP000000647">
    <property type="component" value="Chromosome"/>
</dbReference>
<dbReference type="GO" id="GO:0005525">
    <property type="term" value="F:GTP binding"/>
    <property type="evidence" value="ECO:0007669"/>
    <property type="project" value="UniProtKB-UniRule"/>
</dbReference>
<dbReference type="GO" id="GO:0043022">
    <property type="term" value="F:ribosome binding"/>
    <property type="evidence" value="ECO:0007669"/>
    <property type="project" value="TreeGrafter"/>
</dbReference>
<dbReference type="GO" id="GO:0042254">
    <property type="term" value="P:ribosome biogenesis"/>
    <property type="evidence" value="ECO:0007669"/>
    <property type="project" value="UniProtKB-KW"/>
</dbReference>
<dbReference type="CDD" id="cd01894">
    <property type="entry name" value="EngA1"/>
    <property type="match status" value="1"/>
</dbReference>
<dbReference type="CDD" id="cd01895">
    <property type="entry name" value="EngA2"/>
    <property type="match status" value="1"/>
</dbReference>
<dbReference type="FunFam" id="3.30.300.20:FF:000004">
    <property type="entry name" value="GTPase Der"/>
    <property type="match status" value="1"/>
</dbReference>
<dbReference type="FunFam" id="3.40.50.300:FF:000040">
    <property type="entry name" value="GTPase Der"/>
    <property type="match status" value="1"/>
</dbReference>
<dbReference type="FunFam" id="3.40.50.300:FF:000057">
    <property type="entry name" value="GTPase Der"/>
    <property type="match status" value="1"/>
</dbReference>
<dbReference type="Gene3D" id="3.30.300.20">
    <property type="match status" value="1"/>
</dbReference>
<dbReference type="Gene3D" id="3.40.50.300">
    <property type="entry name" value="P-loop containing nucleotide triphosphate hydrolases"/>
    <property type="match status" value="2"/>
</dbReference>
<dbReference type="HAMAP" id="MF_00195">
    <property type="entry name" value="GTPase_Der"/>
    <property type="match status" value="1"/>
</dbReference>
<dbReference type="InterPro" id="IPR031166">
    <property type="entry name" value="G_ENGA"/>
</dbReference>
<dbReference type="InterPro" id="IPR006073">
    <property type="entry name" value="GTP-bd"/>
</dbReference>
<dbReference type="InterPro" id="IPR016484">
    <property type="entry name" value="GTPase_Der"/>
</dbReference>
<dbReference type="InterPro" id="IPR032859">
    <property type="entry name" value="KH_dom-like"/>
</dbReference>
<dbReference type="InterPro" id="IPR015946">
    <property type="entry name" value="KH_dom-like_a/b"/>
</dbReference>
<dbReference type="InterPro" id="IPR027417">
    <property type="entry name" value="P-loop_NTPase"/>
</dbReference>
<dbReference type="InterPro" id="IPR005225">
    <property type="entry name" value="Small_GTP-bd"/>
</dbReference>
<dbReference type="NCBIfam" id="TIGR03594">
    <property type="entry name" value="GTPase_EngA"/>
    <property type="match status" value="1"/>
</dbReference>
<dbReference type="NCBIfam" id="TIGR00231">
    <property type="entry name" value="small_GTP"/>
    <property type="match status" value="2"/>
</dbReference>
<dbReference type="PANTHER" id="PTHR43834">
    <property type="entry name" value="GTPASE DER"/>
    <property type="match status" value="1"/>
</dbReference>
<dbReference type="PANTHER" id="PTHR43834:SF6">
    <property type="entry name" value="GTPASE DER"/>
    <property type="match status" value="1"/>
</dbReference>
<dbReference type="Pfam" id="PF14714">
    <property type="entry name" value="KH_dom-like"/>
    <property type="match status" value="1"/>
</dbReference>
<dbReference type="Pfam" id="PF01926">
    <property type="entry name" value="MMR_HSR1"/>
    <property type="match status" value="2"/>
</dbReference>
<dbReference type="PIRSF" id="PIRSF006485">
    <property type="entry name" value="GTP-binding_EngA"/>
    <property type="match status" value="1"/>
</dbReference>
<dbReference type="PRINTS" id="PR00326">
    <property type="entry name" value="GTP1OBG"/>
</dbReference>
<dbReference type="SUPFAM" id="SSF52540">
    <property type="entry name" value="P-loop containing nucleoside triphosphate hydrolases"/>
    <property type="match status" value="2"/>
</dbReference>
<dbReference type="PROSITE" id="PS51712">
    <property type="entry name" value="G_ENGA"/>
    <property type="match status" value="2"/>
</dbReference>
<accession>A1WUL5</accession>
<evidence type="ECO:0000255" key="1">
    <source>
        <dbReference type="HAMAP-Rule" id="MF_00195"/>
    </source>
</evidence>
<evidence type="ECO:0000256" key="2">
    <source>
        <dbReference type="SAM" id="MobiDB-lite"/>
    </source>
</evidence>
<sequence length="472" mass="51578">MSAVIALVGRPNVGKSTLFNRLTGSRDALVADHPGLTRDRQYGIVRHQGGHAVVVDTGGMGEELEGVGGCMHEQARAAIAGADAVVFLVDGQAGATVGDEEIAAELRRAQVPVFLAVNKTDGLDAGVAAADFHGLGLQPVHAIAATRGRGVGELLDAVFALLPPAEPDAVGSDGPGGIPVAMIGRPNVGKSTLVNRLLGEERVVVYDEPGTTRDSIAVPFERDGQHYTLIDTAGVRRRARVQETVEKFSVVKTLEAIERASVVMLVTDAQEGITEQDAHLAGHVLQAGRALVLVINKWDGLDPDQRRKVRRDLDLRFAFLGFARHHFVSALHGSGVGLLLESVERAHAAAHRDLATPELNDALQEALANHQPPLSRGRRIKLRYAHQGGHNPPVIVIHGNQVQRLPRAYMRYLENFFRDTFDLYGTPVRIECRASDNPFADKPNQLTERQRRRRQRVIHHAKKREKKRKRRR</sequence>
<gene>
    <name evidence="1" type="primary">der</name>
    <name type="synonym">engA</name>
    <name type="ordered locus">Hhal_0591</name>
</gene>
<keyword id="KW-0342">GTP-binding</keyword>
<keyword id="KW-0547">Nucleotide-binding</keyword>
<keyword id="KW-1185">Reference proteome</keyword>
<keyword id="KW-0677">Repeat</keyword>
<keyword id="KW-0690">Ribosome biogenesis</keyword>
<reference key="1">
    <citation type="submission" date="2006-12" db="EMBL/GenBank/DDBJ databases">
        <title>Complete sequence of Halorhodospira halophila SL1.</title>
        <authorList>
            <consortium name="US DOE Joint Genome Institute"/>
            <person name="Copeland A."/>
            <person name="Lucas S."/>
            <person name="Lapidus A."/>
            <person name="Barry K."/>
            <person name="Detter J.C."/>
            <person name="Glavina del Rio T."/>
            <person name="Hammon N."/>
            <person name="Israni S."/>
            <person name="Dalin E."/>
            <person name="Tice H."/>
            <person name="Pitluck S."/>
            <person name="Saunders E."/>
            <person name="Brettin T."/>
            <person name="Bruce D."/>
            <person name="Han C."/>
            <person name="Tapia R."/>
            <person name="Schmutz J."/>
            <person name="Larimer F."/>
            <person name="Land M."/>
            <person name="Hauser L."/>
            <person name="Kyrpides N."/>
            <person name="Mikhailova N."/>
            <person name="Hoff W."/>
            <person name="Richardson P."/>
        </authorList>
    </citation>
    <scope>NUCLEOTIDE SEQUENCE [LARGE SCALE GENOMIC DNA]</scope>
    <source>
        <strain>DSM 244 / SL1</strain>
    </source>
</reference>
<proteinExistence type="inferred from homology"/>
<comment type="function">
    <text evidence="1">GTPase that plays an essential role in the late steps of ribosome biogenesis.</text>
</comment>
<comment type="subunit">
    <text evidence="1">Associates with the 50S ribosomal subunit.</text>
</comment>
<comment type="similarity">
    <text evidence="1">Belongs to the TRAFAC class TrmE-Era-EngA-EngB-Septin-like GTPase superfamily. EngA (Der) GTPase family.</text>
</comment>
<organism>
    <name type="scientific">Halorhodospira halophila (strain DSM 244 / SL1)</name>
    <name type="common">Ectothiorhodospira halophila (strain DSM 244 / SL1)</name>
    <dbReference type="NCBI Taxonomy" id="349124"/>
    <lineage>
        <taxon>Bacteria</taxon>
        <taxon>Pseudomonadati</taxon>
        <taxon>Pseudomonadota</taxon>
        <taxon>Gammaproteobacteria</taxon>
        <taxon>Chromatiales</taxon>
        <taxon>Ectothiorhodospiraceae</taxon>
        <taxon>Halorhodospira</taxon>
    </lineage>
</organism>
<feature type="chain" id="PRO_1000011635" description="GTPase Der">
    <location>
        <begin position="1"/>
        <end position="472"/>
    </location>
</feature>
<feature type="domain" description="EngA-type G 1">
    <location>
        <begin position="3"/>
        <end position="166"/>
    </location>
</feature>
<feature type="domain" description="EngA-type G 2">
    <location>
        <begin position="178"/>
        <end position="351"/>
    </location>
</feature>
<feature type="domain" description="KH-like" evidence="1">
    <location>
        <begin position="352"/>
        <end position="436"/>
    </location>
</feature>
<feature type="region of interest" description="Disordered" evidence="2">
    <location>
        <begin position="434"/>
        <end position="472"/>
    </location>
</feature>
<feature type="compositionally biased region" description="Basic residues" evidence="2">
    <location>
        <begin position="450"/>
        <end position="472"/>
    </location>
</feature>
<feature type="binding site" evidence="1">
    <location>
        <begin position="9"/>
        <end position="16"/>
    </location>
    <ligand>
        <name>GTP</name>
        <dbReference type="ChEBI" id="CHEBI:37565"/>
        <label>1</label>
    </ligand>
</feature>
<feature type="binding site" evidence="1">
    <location>
        <begin position="56"/>
        <end position="60"/>
    </location>
    <ligand>
        <name>GTP</name>
        <dbReference type="ChEBI" id="CHEBI:37565"/>
        <label>1</label>
    </ligand>
</feature>
<feature type="binding site" evidence="1">
    <location>
        <begin position="118"/>
        <end position="121"/>
    </location>
    <ligand>
        <name>GTP</name>
        <dbReference type="ChEBI" id="CHEBI:37565"/>
        <label>1</label>
    </ligand>
</feature>
<feature type="binding site" evidence="1">
    <location>
        <begin position="184"/>
        <end position="191"/>
    </location>
    <ligand>
        <name>GTP</name>
        <dbReference type="ChEBI" id="CHEBI:37565"/>
        <label>2</label>
    </ligand>
</feature>
<feature type="binding site" evidence="1">
    <location>
        <begin position="231"/>
        <end position="235"/>
    </location>
    <ligand>
        <name>GTP</name>
        <dbReference type="ChEBI" id="CHEBI:37565"/>
        <label>2</label>
    </ligand>
</feature>
<feature type="binding site" evidence="1">
    <location>
        <begin position="296"/>
        <end position="299"/>
    </location>
    <ligand>
        <name>GTP</name>
        <dbReference type="ChEBI" id="CHEBI:37565"/>
        <label>2</label>
    </ligand>
</feature>
<protein>
    <recommendedName>
        <fullName evidence="1">GTPase Der</fullName>
    </recommendedName>
    <alternativeName>
        <fullName evidence="1">GTP-binding protein EngA</fullName>
    </alternativeName>
</protein>